<feature type="chain" id="PRO_0000244899" description="NADH-quinone oxidoreductase subunit H">
    <location>
        <begin position="1"/>
        <end position="357"/>
    </location>
</feature>
<feature type="transmembrane region" description="Helical" evidence="1">
    <location>
        <begin position="18"/>
        <end position="38"/>
    </location>
</feature>
<feature type="transmembrane region" description="Helical" evidence="1">
    <location>
        <begin position="92"/>
        <end position="112"/>
    </location>
</feature>
<feature type="transmembrane region" description="Helical" evidence="1">
    <location>
        <begin position="127"/>
        <end position="147"/>
    </location>
</feature>
<feature type="transmembrane region" description="Helical" evidence="1">
    <location>
        <begin position="165"/>
        <end position="185"/>
    </location>
</feature>
<feature type="transmembrane region" description="Helical" evidence="1">
    <location>
        <begin position="206"/>
        <end position="226"/>
    </location>
</feature>
<feature type="transmembrane region" description="Helical" evidence="1">
    <location>
        <begin position="268"/>
        <end position="288"/>
    </location>
</feature>
<feature type="transmembrane region" description="Helical" evidence="1">
    <location>
        <begin position="294"/>
        <end position="314"/>
    </location>
</feature>
<feature type="transmembrane region" description="Helical" evidence="1">
    <location>
        <begin position="329"/>
        <end position="349"/>
    </location>
</feature>
<dbReference type="EC" id="7.1.1.-" evidence="1"/>
<dbReference type="EMBL" id="BX640413">
    <property type="protein sequence ID" value="CAE41151.1"/>
    <property type="molecule type" value="Genomic_DNA"/>
</dbReference>
<dbReference type="RefSeq" id="NP_879658.1">
    <property type="nucleotide sequence ID" value="NC_002929.2"/>
</dbReference>
<dbReference type="RefSeq" id="WP_003813926.1">
    <property type="nucleotide sequence ID" value="NZ_CP039022.1"/>
</dbReference>
<dbReference type="SMR" id="Q7VZP8"/>
<dbReference type="STRING" id="257313.BP0848"/>
<dbReference type="PaxDb" id="257313-BP0848"/>
<dbReference type="GeneID" id="93205167"/>
<dbReference type="KEGG" id="bpe:BP0848"/>
<dbReference type="PATRIC" id="fig|257313.5.peg.902"/>
<dbReference type="eggNOG" id="COG1005">
    <property type="taxonomic scope" value="Bacteria"/>
</dbReference>
<dbReference type="HOGENOM" id="CLU_015134_0_1_4"/>
<dbReference type="Proteomes" id="UP000002676">
    <property type="component" value="Chromosome"/>
</dbReference>
<dbReference type="GO" id="GO:0005886">
    <property type="term" value="C:plasma membrane"/>
    <property type="evidence" value="ECO:0007669"/>
    <property type="project" value="UniProtKB-SubCell"/>
</dbReference>
<dbReference type="GO" id="GO:0003954">
    <property type="term" value="F:NADH dehydrogenase activity"/>
    <property type="evidence" value="ECO:0007669"/>
    <property type="project" value="TreeGrafter"/>
</dbReference>
<dbReference type="GO" id="GO:0016655">
    <property type="term" value="F:oxidoreductase activity, acting on NAD(P)H, quinone or similar compound as acceptor"/>
    <property type="evidence" value="ECO:0007669"/>
    <property type="project" value="UniProtKB-UniRule"/>
</dbReference>
<dbReference type="GO" id="GO:0048038">
    <property type="term" value="F:quinone binding"/>
    <property type="evidence" value="ECO:0007669"/>
    <property type="project" value="UniProtKB-KW"/>
</dbReference>
<dbReference type="GO" id="GO:0009060">
    <property type="term" value="P:aerobic respiration"/>
    <property type="evidence" value="ECO:0007669"/>
    <property type="project" value="TreeGrafter"/>
</dbReference>
<dbReference type="HAMAP" id="MF_01350">
    <property type="entry name" value="NDH1_NuoH"/>
    <property type="match status" value="1"/>
</dbReference>
<dbReference type="InterPro" id="IPR001694">
    <property type="entry name" value="NADH_UbQ_OxRdtase_su1/FPO"/>
</dbReference>
<dbReference type="InterPro" id="IPR018086">
    <property type="entry name" value="NADH_UbQ_OxRdtase_su1_CS"/>
</dbReference>
<dbReference type="NCBIfam" id="NF004741">
    <property type="entry name" value="PRK06076.1-2"/>
    <property type="match status" value="1"/>
</dbReference>
<dbReference type="NCBIfam" id="NF004742">
    <property type="entry name" value="PRK06076.1-3"/>
    <property type="match status" value="1"/>
</dbReference>
<dbReference type="PANTHER" id="PTHR11432">
    <property type="entry name" value="NADH DEHYDROGENASE SUBUNIT 1"/>
    <property type="match status" value="1"/>
</dbReference>
<dbReference type="PANTHER" id="PTHR11432:SF3">
    <property type="entry name" value="NADH-UBIQUINONE OXIDOREDUCTASE CHAIN 1"/>
    <property type="match status" value="1"/>
</dbReference>
<dbReference type="Pfam" id="PF00146">
    <property type="entry name" value="NADHdh"/>
    <property type="match status" value="1"/>
</dbReference>
<dbReference type="PROSITE" id="PS00668">
    <property type="entry name" value="COMPLEX1_ND1_2"/>
    <property type="match status" value="1"/>
</dbReference>
<protein>
    <recommendedName>
        <fullName evidence="1">NADH-quinone oxidoreductase subunit H</fullName>
        <ecNumber evidence="1">7.1.1.-</ecNumber>
    </recommendedName>
    <alternativeName>
        <fullName evidence="1">NADH dehydrogenase I subunit H</fullName>
    </alternativeName>
    <alternativeName>
        <fullName evidence="1">NDH-1 subunit H</fullName>
    </alternativeName>
</protein>
<keyword id="KW-0997">Cell inner membrane</keyword>
<keyword id="KW-1003">Cell membrane</keyword>
<keyword id="KW-0472">Membrane</keyword>
<keyword id="KW-0520">NAD</keyword>
<keyword id="KW-0874">Quinone</keyword>
<keyword id="KW-1185">Reference proteome</keyword>
<keyword id="KW-1278">Translocase</keyword>
<keyword id="KW-0812">Transmembrane</keyword>
<keyword id="KW-1133">Transmembrane helix</keyword>
<keyword id="KW-0830">Ubiquinone</keyword>
<comment type="function">
    <text evidence="1">NDH-1 shuttles electrons from NADH, via FMN and iron-sulfur (Fe-S) centers, to quinones in the respiratory chain. The immediate electron acceptor for the enzyme in this species is believed to be ubiquinone. Couples the redox reaction to proton translocation (for every two electrons transferred, four hydrogen ions are translocated across the cytoplasmic membrane), and thus conserves the redox energy in a proton gradient. This subunit may bind ubiquinone.</text>
</comment>
<comment type="catalytic activity">
    <reaction evidence="1">
        <text>a quinone + NADH + 5 H(+)(in) = a quinol + NAD(+) + 4 H(+)(out)</text>
        <dbReference type="Rhea" id="RHEA:57888"/>
        <dbReference type="ChEBI" id="CHEBI:15378"/>
        <dbReference type="ChEBI" id="CHEBI:24646"/>
        <dbReference type="ChEBI" id="CHEBI:57540"/>
        <dbReference type="ChEBI" id="CHEBI:57945"/>
        <dbReference type="ChEBI" id="CHEBI:132124"/>
    </reaction>
</comment>
<comment type="subunit">
    <text evidence="1">NDH-1 is composed of 14 different subunits. Subunits NuoA, H, J, K, L, M, N constitute the membrane sector of the complex.</text>
</comment>
<comment type="subcellular location">
    <subcellularLocation>
        <location evidence="1">Cell inner membrane</location>
        <topology evidence="1">Multi-pass membrane protein</topology>
    </subcellularLocation>
</comment>
<comment type="similarity">
    <text evidence="1">Belongs to the complex I subunit 1 family.</text>
</comment>
<proteinExistence type="inferred from homology"/>
<evidence type="ECO:0000255" key="1">
    <source>
        <dbReference type="HAMAP-Rule" id="MF_01350"/>
    </source>
</evidence>
<accession>Q7VZP8</accession>
<reference key="1">
    <citation type="journal article" date="2003" name="Nat. Genet.">
        <title>Comparative analysis of the genome sequences of Bordetella pertussis, Bordetella parapertussis and Bordetella bronchiseptica.</title>
        <authorList>
            <person name="Parkhill J."/>
            <person name="Sebaihia M."/>
            <person name="Preston A."/>
            <person name="Murphy L.D."/>
            <person name="Thomson N.R."/>
            <person name="Harris D.E."/>
            <person name="Holden M.T.G."/>
            <person name="Churcher C.M."/>
            <person name="Bentley S.D."/>
            <person name="Mungall K.L."/>
            <person name="Cerdeno-Tarraga A.-M."/>
            <person name="Temple L."/>
            <person name="James K.D."/>
            <person name="Harris B."/>
            <person name="Quail M.A."/>
            <person name="Achtman M."/>
            <person name="Atkin R."/>
            <person name="Baker S."/>
            <person name="Basham D."/>
            <person name="Bason N."/>
            <person name="Cherevach I."/>
            <person name="Chillingworth T."/>
            <person name="Collins M."/>
            <person name="Cronin A."/>
            <person name="Davis P."/>
            <person name="Doggett J."/>
            <person name="Feltwell T."/>
            <person name="Goble A."/>
            <person name="Hamlin N."/>
            <person name="Hauser H."/>
            <person name="Holroyd S."/>
            <person name="Jagels K."/>
            <person name="Leather S."/>
            <person name="Moule S."/>
            <person name="Norberczak H."/>
            <person name="O'Neil S."/>
            <person name="Ormond D."/>
            <person name="Price C."/>
            <person name="Rabbinowitsch E."/>
            <person name="Rutter S."/>
            <person name="Sanders M."/>
            <person name="Saunders D."/>
            <person name="Seeger K."/>
            <person name="Sharp S."/>
            <person name="Simmonds M."/>
            <person name="Skelton J."/>
            <person name="Squares R."/>
            <person name="Squares S."/>
            <person name="Stevens K."/>
            <person name="Unwin L."/>
            <person name="Whitehead S."/>
            <person name="Barrell B.G."/>
            <person name="Maskell D.J."/>
        </authorList>
    </citation>
    <scope>NUCLEOTIDE SEQUENCE [LARGE SCALE GENOMIC DNA]</scope>
    <source>
        <strain>Tohama I / ATCC BAA-589 / NCTC 13251</strain>
    </source>
</reference>
<name>NUOH_BORPE</name>
<organism>
    <name type="scientific">Bordetella pertussis (strain Tohama I / ATCC BAA-589 / NCTC 13251)</name>
    <dbReference type="NCBI Taxonomy" id="257313"/>
    <lineage>
        <taxon>Bacteria</taxon>
        <taxon>Pseudomonadati</taxon>
        <taxon>Pseudomonadota</taxon>
        <taxon>Betaproteobacteria</taxon>
        <taxon>Burkholderiales</taxon>
        <taxon>Alcaligenaceae</taxon>
        <taxon>Bordetella</taxon>
    </lineage>
</organism>
<gene>
    <name evidence="1" type="primary">nuoH</name>
    <name type="ordered locus">BP0848</name>
</gene>
<sequence>MEWLNVLESHGQALLGPVAWMVVWSLVKIVVIAVPIILCVAYLTYWERKMIGAMHVRLGPTRVGFKGLLQPFADVFKLLTKEVVVPSAANKVLFVVAPVVTLMPALAAWAVVPFGPEVVLANVNAGLLYIMAITSIGVYGVIVAGWASNSKYAFLGALRASAQMVSYELAIGFVLVSVLLVSGSLNMSEIVLGQGRGWFAERGLTFLSWNWLPLLPLFIIYVISAVAETNRHPFDVVEGESEIVAGHMVEYSGMAFALFFLGEYANMILLSCMAAIMFLGGWMSPIDIAPLNWIPGWIWLGIKTFCVVSMFVWFRASFPRYRYDQIMRLGWKIFIPLTGVWLVVLAIWMQTPWNIWR</sequence>